<protein>
    <recommendedName>
        <fullName>Movement protein p5</fullName>
    </recommendedName>
    <alternativeName>
        <fullName>5 kDa protein</fullName>
    </alternativeName>
    <alternativeName>
        <fullName>Protein P5</fullName>
    </alternativeName>
</protein>
<evidence type="ECO:0000250" key="1"/>
<evidence type="ECO:0000255" key="2"/>
<evidence type="ECO:0000305" key="3"/>
<comment type="function">
    <text evidence="1">Transports viral genome to neighboring plant cells directly through plasmosdesmata, without any budding. The movement protein allows efficient cell to cell propagation, by bypassing the host cell wall barrier. Two movement proteins, p6, Hsp70h and three structural proteins, CP, CPm, and P64 are essential for cell-cell movement. Also plays a role in virion formation. Together with CPm and p64, encapsidates the 5'-terminal portion of the viral genome (By similarity).</text>
</comment>
<comment type="subcellular location">
    <subcellularLocation>
        <location evidence="1">Host rough endoplasmic reticulum membrane</location>
        <topology evidence="3">Single-pass type III membrane protein</topology>
    </subcellularLocation>
</comment>
<sequence>MDDFKQAILLLVVDFVFVIILLLVLTFVVPRLQQSSTINTGLRTV</sequence>
<name>MVP2_GLRV3</name>
<feature type="chain" id="PRO_0000402527" description="Movement protein p5">
    <location>
        <begin position="1"/>
        <end position="45"/>
    </location>
</feature>
<feature type="transmembrane region" description="Helical" evidence="2">
    <location>
        <begin position="8"/>
        <end position="28"/>
    </location>
</feature>
<accession>O71191</accession>
<organism>
    <name type="scientific">Grapevine leafroll-associated virus 3 (isolate United States/NY1)</name>
    <name type="common">GLRaV-3</name>
    <name type="synonym">Grapevine leafroll-associated closterovirus (isolate 109)</name>
    <dbReference type="NCBI Taxonomy" id="651354"/>
    <lineage>
        <taxon>Viruses</taxon>
        <taxon>Riboviria</taxon>
        <taxon>Orthornavirae</taxon>
        <taxon>Kitrinoviricota</taxon>
        <taxon>Alsuviricetes</taxon>
        <taxon>Martellivirales</taxon>
        <taxon>Closteroviridae</taxon>
        <taxon>Ampelovirus</taxon>
        <taxon>Grapevine leafroll-associated virus 3</taxon>
    </lineage>
</organism>
<gene>
    <name type="ORF">ORF3</name>
</gene>
<keyword id="KW-1038">Host endoplasmic reticulum</keyword>
<keyword id="KW-1043">Host membrane</keyword>
<keyword id="KW-0472">Membrane</keyword>
<keyword id="KW-1185">Reference proteome</keyword>
<keyword id="KW-0812">Transmembrane</keyword>
<keyword id="KW-1133">Transmembrane helix</keyword>
<dbReference type="EMBL" id="AF037268">
    <property type="protein sequence ID" value="AAC40707.1"/>
    <property type="molecule type" value="Genomic_RNA"/>
</dbReference>
<dbReference type="EMBL" id="EU344893">
    <property type="protein sequence ID" value="ACA51528.1"/>
    <property type="molecule type" value="Genomic_RNA"/>
</dbReference>
<dbReference type="EMBL" id="GQ352631">
    <property type="protein sequence ID" value="ADI49415.1"/>
    <property type="molecule type" value="Genomic_RNA"/>
</dbReference>
<dbReference type="EMBL" id="GU983863">
    <property type="protein sequence ID" value="ADM07407.1"/>
    <property type="molecule type" value="Genomic_RNA"/>
</dbReference>
<dbReference type="RefSeq" id="NP_813798.1">
    <property type="nucleotide sequence ID" value="NC_004667.1"/>
</dbReference>
<dbReference type="SMR" id="O71191"/>
<dbReference type="KEGG" id="vg:1444469"/>
<dbReference type="Proteomes" id="UP000006707">
    <property type="component" value="Segment"/>
</dbReference>
<dbReference type="GO" id="GO:0044169">
    <property type="term" value="C:host cell rough endoplasmic reticulum membrane"/>
    <property type="evidence" value="ECO:0007669"/>
    <property type="project" value="UniProtKB-SubCell"/>
</dbReference>
<dbReference type="GO" id="GO:0016020">
    <property type="term" value="C:membrane"/>
    <property type="evidence" value="ECO:0007669"/>
    <property type="project" value="UniProtKB-KW"/>
</dbReference>
<organismHost>
    <name type="scientific">Vitis vinifera</name>
    <name type="common">Grape</name>
    <dbReference type="NCBI Taxonomy" id="29760"/>
</organismHost>
<proteinExistence type="inferred from homology"/>
<reference key="1">
    <citation type="journal article" date="1998" name="J. Gen. Virol.">
        <title>Nucleotide sequence of the 3'-terminal two-thirds of the grapevine leafroll-associated virus-3 genome reveals a typical monopartite closterovirus.</title>
        <authorList>
            <person name="Ling K.S."/>
            <person name="Zhu H.Y."/>
            <person name="Drong R.F."/>
            <person name="Slightom J.L."/>
            <person name="McFerson J.R."/>
            <person name="Gonsalves D."/>
        </authorList>
    </citation>
    <scope>NUCLEOTIDE SEQUENCE [GENOMIC RNA]</scope>
</reference>
<reference key="2">
    <citation type="journal article" date="2008" name="Virus Genes">
        <title>Genome analysis and detection of a Chilean isolate of Grapevine leafroll associated virus-3.</title>
        <authorList>
            <person name="Engel E.A."/>
            <person name="Girardi C."/>
            <person name="Escobar P.F."/>
            <person name="Arredondo V."/>
            <person name="Dominguez C."/>
            <person name="Perez-Acle T."/>
            <person name="Valenzuela P.D."/>
        </authorList>
    </citation>
    <scope>NUCLEOTIDE SEQUENCE [GENOMIC RNA]</scope>
    <source>
        <strain>Cl-766</strain>
    </source>
</reference>